<comment type="function">
    <text evidence="1">Required for insertion of 4Fe-4S clusters for at least IspG.</text>
</comment>
<comment type="cofactor">
    <cofactor evidence="1">
        <name>iron-sulfur cluster</name>
        <dbReference type="ChEBI" id="CHEBI:30408"/>
    </cofactor>
    <text evidence="1">Binds 1 iron-sulfur cluster per subunit.</text>
</comment>
<comment type="subunit">
    <text evidence="1">Homodimer.</text>
</comment>
<comment type="similarity">
    <text evidence="1">Belongs to the HesB/IscA family.</text>
</comment>
<sequence length="130" mass="14231">MTSELGIFYRSDFDRAWCDMSAETIKFTDSAAQRVSELLAEEGDQNLKLRVYVTGGGCSGFQYGFTFDEVVNEDDTVVEKNGVSVLVDPMSLQYLQGAEIDYTENVSGSQFVIRNPNATTTCGCGSSFSV</sequence>
<feature type="chain" id="PRO_0000311505" description="Iron-sulfur cluster insertion protein ErpA 2">
    <location>
        <begin position="1"/>
        <end position="130"/>
    </location>
</feature>
<feature type="binding site" evidence="1">
    <location>
        <position position="58"/>
    </location>
    <ligand>
        <name>iron-sulfur cluster</name>
        <dbReference type="ChEBI" id="CHEBI:30408"/>
    </ligand>
</feature>
<feature type="binding site" evidence="1">
    <location>
        <position position="122"/>
    </location>
    <ligand>
        <name>iron-sulfur cluster</name>
        <dbReference type="ChEBI" id="CHEBI:30408"/>
    </ligand>
</feature>
<feature type="binding site" evidence="1">
    <location>
        <position position="124"/>
    </location>
    <ligand>
        <name>iron-sulfur cluster</name>
        <dbReference type="ChEBI" id="CHEBI:30408"/>
    </ligand>
</feature>
<reference key="1">
    <citation type="journal article" date="2004" name="PLoS Biol.">
        <title>Genomic insights into methanotrophy: the complete genome sequence of Methylococcus capsulatus (Bath).</title>
        <authorList>
            <person name="Ward N.L."/>
            <person name="Larsen O."/>
            <person name="Sakwa J."/>
            <person name="Bruseth L."/>
            <person name="Khouri H.M."/>
            <person name="Durkin A.S."/>
            <person name="Dimitrov G."/>
            <person name="Jiang L."/>
            <person name="Scanlan D."/>
            <person name="Kang K.H."/>
            <person name="Lewis M.R."/>
            <person name="Nelson K.E."/>
            <person name="Methe B.A."/>
            <person name="Wu M."/>
            <person name="Heidelberg J.F."/>
            <person name="Paulsen I.T."/>
            <person name="Fouts D.E."/>
            <person name="Ravel J."/>
            <person name="Tettelin H."/>
            <person name="Ren Q."/>
            <person name="Read T.D."/>
            <person name="DeBoy R.T."/>
            <person name="Seshadri R."/>
            <person name="Salzberg S.L."/>
            <person name="Jensen H.B."/>
            <person name="Birkeland N.K."/>
            <person name="Nelson W.C."/>
            <person name="Dodson R.J."/>
            <person name="Grindhaug S.H."/>
            <person name="Holt I.E."/>
            <person name="Eidhammer I."/>
            <person name="Jonasen I."/>
            <person name="Vanaken S."/>
            <person name="Utterback T.R."/>
            <person name="Feldblyum T.V."/>
            <person name="Fraser C.M."/>
            <person name="Lillehaug J.R."/>
            <person name="Eisen J.A."/>
        </authorList>
    </citation>
    <scope>NUCLEOTIDE SEQUENCE [LARGE SCALE GENOMIC DNA]</scope>
    <source>
        <strain>ATCC 33009 / NCIMB 11132 / Bath</strain>
    </source>
</reference>
<proteinExistence type="inferred from homology"/>
<organism>
    <name type="scientific">Methylococcus capsulatus (strain ATCC 33009 / NCIMB 11132 / Bath)</name>
    <dbReference type="NCBI Taxonomy" id="243233"/>
    <lineage>
        <taxon>Bacteria</taxon>
        <taxon>Pseudomonadati</taxon>
        <taxon>Pseudomonadota</taxon>
        <taxon>Gammaproteobacteria</taxon>
        <taxon>Methylococcales</taxon>
        <taxon>Methylococcaceae</taxon>
        <taxon>Methylococcus</taxon>
    </lineage>
</organism>
<dbReference type="EMBL" id="AE017282">
    <property type="protein sequence ID" value="AAU92998.1"/>
    <property type="molecule type" value="Genomic_DNA"/>
</dbReference>
<dbReference type="SMR" id="Q60AU6"/>
<dbReference type="STRING" id="243233.MCA0748"/>
<dbReference type="KEGG" id="mca:MCA0748"/>
<dbReference type="eggNOG" id="COG0316">
    <property type="taxonomic scope" value="Bacteria"/>
</dbReference>
<dbReference type="HOGENOM" id="CLU_069054_5_3_6"/>
<dbReference type="Proteomes" id="UP000006821">
    <property type="component" value="Chromosome"/>
</dbReference>
<dbReference type="GO" id="GO:0051537">
    <property type="term" value="F:2 iron, 2 sulfur cluster binding"/>
    <property type="evidence" value="ECO:0007669"/>
    <property type="project" value="TreeGrafter"/>
</dbReference>
<dbReference type="GO" id="GO:0051539">
    <property type="term" value="F:4 iron, 4 sulfur cluster binding"/>
    <property type="evidence" value="ECO:0007669"/>
    <property type="project" value="TreeGrafter"/>
</dbReference>
<dbReference type="GO" id="GO:0005506">
    <property type="term" value="F:iron ion binding"/>
    <property type="evidence" value="ECO:0007669"/>
    <property type="project" value="UniProtKB-UniRule"/>
</dbReference>
<dbReference type="GO" id="GO:0016226">
    <property type="term" value="P:iron-sulfur cluster assembly"/>
    <property type="evidence" value="ECO:0007669"/>
    <property type="project" value="UniProtKB-UniRule"/>
</dbReference>
<dbReference type="FunFam" id="2.60.300.12:FF:000002">
    <property type="entry name" value="Iron-sulfur cluster insertion protein ErpA"/>
    <property type="match status" value="1"/>
</dbReference>
<dbReference type="Gene3D" id="2.60.300.12">
    <property type="entry name" value="HesB-like domain"/>
    <property type="match status" value="1"/>
</dbReference>
<dbReference type="HAMAP" id="MF_01380">
    <property type="entry name" value="Fe_S_insert_ErpA"/>
    <property type="match status" value="1"/>
</dbReference>
<dbReference type="InterPro" id="IPR000361">
    <property type="entry name" value="FeS_biogenesis"/>
</dbReference>
<dbReference type="InterPro" id="IPR016092">
    <property type="entry name" value="FeS_cluster_insertion"/>
</dbReference>
<dbReference type="InterPro" id="IPR017870">
    <property type="entry name" value="FeS_cluster_insertion_CS"/>
</dbReference>
<dbReference type="InterPro" id="IPR023063">
    <property type="entry name" value="FeS_cluster_insertion_RrpA"/>
</dbReference>
<dbReference type="InterPro" id="IPR035903">
    <property type="entry name" value="HesB-like_dom_sf"/>
</dbReference>
<dbReference type="NCBIfam" id="TIGR00049">
    <property type="entry name" value="iron-sulfur cluster assembly accessory protein"/>
    <property type="match status" value="1"/>
</dbReference>
<dbReference type="NCBIfam" id="NF010147">
    <property type="entry name" value="PRK13623.1"/>
    <property type="match status" value="1"/>
</dbReference>
<dbReference type="PANTHER" id="PTHR43011">
    <property type="entry name" value="IRON-SULFUR CLUSTER ASSEMBLY 2 HOMOLOG, MITOCHONDRIAL"/>
    <property type="match status" value="1"/>
</dbReference>
<dbReference type="PANTHER" id="PTHR43011:SF1">
    <property type="entry name" value="IRON-SULFUR CLUSTER ASSEMBLY 2 HOMOLOG, MITOCHONDRIAL"/>
    <property type="match status" value="1"/>
</dbReference>
<dbReference type="Pfam" id="PF01521">
    <property type="entry name" value="Fe-S_biosyn"/>
    <property type="match status" value="1"/>
</dbReference>
<dbReference type="SUPFAM" id="SSF89360">
    <property type="entry name" value="HesB-like domain"/>
    <property type="match status" value="1"/>
</dbReference>
<dbReference type="PROSITE" id="PS01152">
    <property type="entry name" value="HESB"/>
    <property type="match status" value="1"/>
</dbReference>
<evidence type="ECO:0000255" key="1">
    <source>
        <dbReference type="HAMAP-Rule" id="MF_01380"/>
    </source>
</evidence>
<name>ERPA2_METCA</name>
<protein>
    <recommendedName>
        <fullName evidence="1">Iron-sulfur cluster insertion protein ErpA 2</fullName>
    </recommendedName>
</protein>
<keyword id="KW-0408">Iron</keyword>
<keyword id="KW-0411">Iron-sulfur</keyword>
<keyword id="KW-0479">Metal-binding</keyword>
<keyword id="KW-1185">Reference proteome</keyword>
<gene>
    <name evidence="1" type="primary">erpA2</name>
    <name type="ordered locus">MCA0748</name>
</gene>
<accession>Q60AU6</accession>